<comment type="subcellular location">
    <subcellularLocation>
        <location evidence="3 5">Plastid</location>
        <location evidence="3 5">Chloroplast thylakoid membrane</location>
        <topology evidence="3">Single-pass membrane protein</topology>
        <orientation evidence="3">Lumenal side</orientation>
    </subcellularLocation>
</comment>
<comment type="similarity">
    <text evidence="6">Belongs to the UPF0603 family.</text>
</comment>
<dbReference type="EMBL" id="AJ560718">
    <property type="protein sequence ID" value="CAD90763.1"/>
    <property type="molecule type" value="mRNA"/>
</dbReference>
<dbReference type="EMBL" id="AC005388">
    <property type="protein sequence ID" value="AAC64889.1"/>
    <property type="molecule type" value="Genomic_DNA"/>
</dbReference>
<dbReference type="EMBL" id="CP002684">
    <property type="protein sequence ID" value="AEE33146.1"/>
    <property type="molecule type" value="Genomic_DNA"/>
</dbReference>
<dbReference type="EMBL" id="AF375432">
    <property type="protein sequence ID" value="AAK53016.1"/>
    <property type="molecule type" value="mRNA"/>
</dbReference>
<dbReference type="EMBL" id="AY062467">
    <property type="protein sequence ID" value="AAL32545.1"/>
    <property type="molecule type" value="mRNA"/>
</dbReference>
<dbReference type="EMBL" id="AY081295">
    <property type="protein sequence ID" value="AAL91184.1"/>
    <property type="molecule type" value="mRNA"/>
</dbReference>
<dbReference type="EMBL" id="AY093282">
    <property type="protein sequence ID" value="AAM13281.1"/>
    <property type="molecule type" value="mRNA"/>
</dbReference>
<dbReference type="EMBL" id="BT000389">
    <property type="protein sequence ID" value="AAN15708.1"/>
    <property type="molecule type" value="mRNA"/>
</dbReference>
<dbReference type="EMBL" id="AY143889">
    <property type="protein sequence ID" value="AAN28828.1"/>
    <property type="molecule type" value="mRNA"/>
</dbReference>
<dbReference type="EMBL" id="AY087803">
    <property type="protein sequence ID" value="AAM65339.1"/>
    <property type="molecule type" value="mRNA"/>
</dbReference>
<dbReference type="EMBL" id="AK226383">
    <property type="protein sequence ID" value="BAE98530.1"/>
    <property type="molecule type" value="mRNA"/>
</dbReference>
<dbReference type="PIR" id="H96589">
    <property type="entry name" value="H96589"/>
</dbReference>
<dbReference type="RefSeq" id="NP_564667.1">
    <property type="nucleotide sequence ID" value="NM_104353.3"/>
</dbReference>
<dbReference type="PDB" id="3PTJ">
    <property type="method" value="X-ray"/>
    <property type="resolution" value="2.60 A"/>
    <property type="chains" value="A=84-235"/>
</dbReference>
<dbReference type="PDB" id="3PVH">
    <property type="method" value="X-ray"/>
    <property type="resolution" value="1.60 A"/>
    <property type="chains" value="A=84-235"/>
</dbReference>
<dbReference type="PDB" id="3PW9">
    <property type="method" value="X-ray"/>
    <property type="resolution" value="2.10 A"/>
    <property type="chains" value="A=84-235"/>
</dbReference>
<dbReference type="PDBsum" id="3PTJ"/>
<dbReference type="PDBsum" id="3PVH"/>
<dbReference type="PDBsum" id="3PW9"/>
<dbReference type="SMR" id="Q9ZVL6"/>
<dbReference type="BioGRID" id="27144">
    <property type="interactions" value="1"/>
</dbReference>
<dbReference type="FunCoup" id="Q9ZVL6">
    <property type="interactions" value="1222"/>
</dbReference>
<dbReference type="STRING" id="3702.Q9ZVL6"/>
<dbReference type="iPTMnet" id="Q9ZVL6"/>
<dbReference type="PaxDb" id="3702-AT1G54780.1"/>
<dbReference type="ProteomicsDB" id="228563"/>
<dbReference type="EnsemblPlants" id="AT1G54780.1">
    <property type="protein sequence ID" value="AT1G54780.1"/>
    <property type="gene ID" value="AT1G54780"/>
</dbReference>
<dbReference type="GeneID" id="841919"/>
<dbReference type="Gramene" id="AT1G54780.1">
    <property type="protein sequence ID" value="AT1G54780.1"/>
    <property type="gene ID" value="AT1G54780"/>
</dbReference>
<dbReference type="KEGG" id="ath:AT1G54780"/>
<dbReference type="Araport" id="AT1G54780"/>
<dbReference type="TAIR" id="AT1G54780">
    <property type="gene designation" value="TLP18.3"/>
</dbReference>
<dbReference type="eggNOG" id="ENOG502QQ6F">
    <property type="taxonomic scope" value="Eukaryota"/>
</dbReference>
<dbReference type="HOGENOM" id="CLU_065264_0_1_1"/>
<dbReference type="InParanoid" id="Q9ZVL6"/>
<dbReference type="OMA" id="IPMVTYF"/>
<dbReference type="OrthoDB" id="5645at2759"/>
<dbReference type="PhylomeDB" id="Q9ZVL6"/>
<dbReference type="BRENDA" id="3.1.3.2">
    <property type="organism ID" value="399"/>
</dbReference>
<dbReference type="CD-CODE" id="4299E36E">
    <property type="entry name" value="Nucleolus"/>
</dbReference>
<dbReference type="EvolutionaryTrace" id="Q9ZVL6"/>
<dbReference type="PRO" id="PR:Q9ZVL6"/>
<dbReference type="Proteomes" id="UP000006548">
    <property type="component" value="Chromosome 1"/>
</dbReference>
<dbReference type="ExpressionAtlas" id="Q9ZVL6">
    <property type="expression patterns" value="baseline and differential"/>
</dbReference>
<dbReference type="GO" id="GO:0009507">
    <property type="term" value="C:chloroplast"/>
    <property type="evidence" value="ECO:0007005"/>
    <property type="project" value="TAIR"/>
</dbReference>
<dbReference type="GO" id="GO:0009534">
    <property type="term" value="C:chloroplast thylakoid"/>
    <property type="evidence" value="ECO:0007005"/>
    <property type="project" value="TAIR"/>
</dbReference>
<dbReference type="GO" id="GO:0009535">
    <property type="term" value="C:chloroplast thylakoid membrane"/>
    <property type="evidence" value="ECO:0007005"/>
    <property type="project" value="TAIR"/>
</dbReference>
<dbReference type="GO" id="GO:0005634">
    <property type="term" value="C:nucleus"/>
    <property type="evidence" value="ECO:0007005"/>
    <property type="project" value="TAIR"/>
</dbReference>
<dbReference type="GO" id="GO:0009579">
    <property type="term" value="C:thylakoid"/>
    <property type="evidence" value="ECO:0007005"/>
    <property type="project" value="TAIR"/>
</dbReference>
<dbReference type="GO" id="GO:0031977">
    <property type="term" value="C:thylakoid lumen"/>
    <property type="evidence" value="ECO:0007005"/>
    <property type="project" value="TAIR"/>
</dbReference>
<dbReference type="GO" id="GO:0003993">
    <property type="term" value="F:acid phosphatase activity"/>
    <property type="evidence" value="ECO:0000314"/>
    <property type="project" value="TAIR"/>
</dbReference>
<dbReference type="GO" id="GO:0003729">
    <property type="term" value="F:mRNA binding"/>
    <property type="evidence" value="ECO:0000314"/>
    <property type="project" value="TAIR"/>
</dbReference>
<dbReference type="GO" id="GO:0010206">
    <property type="term" value="P:photosystem II repair"/>
    <property type="evidence" value="ECO:0000315"/>
    <property type="project" value="TAIR"/>
</dbReference>
<dbReference type="Gene3D" id="3.10.310.50">
    <property type="match status" value="1"/>
</dbReference>
<dbReference type="InterPro" id="IPR007621">
    <property type="entry name" value="TPM_dom"/>
</dbReference>
<dbReference type="PANTHER" id="PTHR30373">
    <property type="entry name" value="UPF0603 PROTEIN YGCG"/>
    <property type="match status" value="1"/>
</dbReference>
<dbReference type="PANTHER" id="PTHR30373:SF2">
    <property type="entry name" value="UPF0603 PROTEIN YGCG"/>
    <property type="match status" value="1"/>
</dbReference>
<dbReference type="Pfam" id="PF04536">
    <property type="entry name" value="TPM_phosphatase"/>
    <property type="match status" value="1"/>
</dbReference>
<name>U603_ARATH</name>
<accession>Q9ZVL6</accession>
<feature type="transit peptide" description="Chloroplast" evidence="1">
    <location>
        <begin position="1"/>
        <end status="unknown"/>
    </location>
</feature>
<feature type="transit peptide" description="Thylakoid" evidence="3 4">
    <location>
        <begin status="unknown"/>
        <end position="84"/>
    </location>
</feature>
<feature type="chain" id="PRO_0000342092" description="UPF0603 protein At1g54780, chloroplastic">
    <location>
        <begin position="85"/>
        <end position="285"/>
    </location>
</feature>
<feature type="transmembrane region" description="Helical" evidence="1">
    <location>
        <begin position="259"/>
        <end position="279"/>
    </location>
</feature>
<feature type="region of interest" description="Disordered" evidence="2">
    <location>
        <begin position="1"/>
        <end position="48"/>
    </location>
</feature>
<feature type="region of interest" description="Disordered" evidence="2">
    <location>
        <begin position="228"/>
        <end position="251"/>
    </location>
</feature>
<feature type="compositionally biased region" description="Polar residues" evidence="2">
    <location>
        <begin position="22"/>
        <end position="40"/>
    </location>
</feature>
<feature type="compositionally biased region" description="Basic and acidic residues" evidence="2">
    <location>
        <begin position="238"/>
        <end position="251"/>
    </location>
</feature>
<feature type="helix" evidence="7">
    <location>
        <begin position="84"/>
        <end position="92"/>
    </location>
</feature>
<feature type="turn" evidence="7">
    <location>
        <begin position="96"/>
        <end position="98"/>
    </location>
</feature>
<feature type="strand" evidence="7">
    <location>
        <begin position="99"/>
        <end position="102"/>
    </location>
</feature>
<feature type="helix" evidence="7">
    <location>
        <begin position="109"/>
        <end position="126"/>
    </location>
</feature>
<feature type="strand" evidence="7">
    <location>
        <begin position="129"/>
        <end position="136"/>
    </location>
</feature>
<feature type="strand" evidence="7">
    <location>
        <begin position="139"/>
        <end position="141"/>
    </location>
</feature>
<feature type="helix" evidence="7">
    <location>
        <begin position="144"/>
        <end position="155"/>
    </location>
</feature>
<feature type="helix" evidence="7">
    <location>
        <begin position="159"/>
        <end position="162"/>
    </location>
</feature>
<feature type="strand" evidence="7">
    <location>
        <begin position="165"/>
        <end position="171"/>
    </location>
</feature>
<feature type="turn" evidence="7">
    <location>
        <begin position="172"/>
        <end position="175"/>
    </location>
</feature>
<feature type="strand" evidence="7">
    <location>
        <begin position="176"/>
        <end position="181"/>
    </location>
</feature>
<feature type="helix" evidence="7">
    <location>
        <begin position="183"/>
        <end position="189"/>
    </location>
</feature>
<feature type="helix" evidence="7">
    <location>
        <begin position="191"/>
        <end position="199"/>
    </location>
</feature>
<feature type="helix" evidence="7">
    <location>
        <begin position="201"/>
        <end position="207"/>
    </location>
</feature>
<feature type="helix" evidence="7">
    <location>
        <begin position="211"/>
        <end position="226"/>
    </location>
</feature>
<proteinExistence type="evidence at protein level"/>
<organism>
    <name type="scientific">Arabidopsis thaliana</name>
    <name type="common">Mouse-ear cress</name>
    <dbReference type="NCBI Taxonomy" id="3702"/>
    <lineage>
        <taxon>Eukaryota</taxon>
        <taxon>Viridiplantae</taxon>
        <taxon>Streptophyta</taxon>
        <taxon>Embryophyta</taxon>
        <taxon>Tracheophyta</taxon>
        <taxon>Spermatophyta</taxon>
        <taxon>Magnoliopsida</taxon>
        <taxon>eudicotyledons</taxon>
        <taxon>Gunneridae</taxon>
        <taxon>Pentapetalae</taxon>
        <taxon>rosids</taxon>
        <taxon>malvids</taxon>
        <taxon>Brassicales</taxon>
        <taxon>Brassicaceae</taxon>
        <taxon>Camelineae</taxon>
        <taxon>Arabidopsis</taxon>
    </lineage>
</organism>
<protein>
    <recommendedName>
        <fullName>UPF0603 protein At1g54780, chloroplastic</fullName>
    </recommendedName>
    <alternativeName>
        <fullName>Thylakoid lumen 18.3 kDa protein</fullName>
    </alternativeName>
</protein>
<sequence>METLLSPRALSPPLNPKPLSLHQTKPTSHSLSLSKPTTFSGPKHLSTRFTKPESRNWLIDAKQGLAALALSLTLTFSPVGTALASEFNILNDGPPKETYVVDDAGVLSRVTKSDLKKLLSDLEYRKKLRLNFITVRKLTSKADAFEYADQVLEKWYPSIEEGNNKGIVVLITSQKEGAITGGPAFIEAVGENILDATVSENLPVLATDEKYNEAVYSSAKRLVAAIDGQPDPGGPTVKDSKRESNFKTKEETDEKRGQFSLVVGGLLVIAFVVPMAQYFAYVSRK</sequence>
<reference key="1">
    <citation type="submission" date="2003-05" db="EMBL/GenBank/DDBJ databases">
        <title>Identification of a new lumenal protein associated with photosystem II.</title>
        <authorList>
            <person name="Shahollari B."/>
            <person name="Oelmueller R."/>
        </authorList>
    </citation>
    <scope>NUCLEOTIDE SEQUENCE [MRNA]</scope>
    <source>
        <strain>cv. Columbia</strain>
    </source>
</reference>
<reference key="2">
    <citation type="journal article" date="2000" name="Nature">
        <title>Sequence and analysis of chromosome 1 of the plant Arabidopsis thaliana.</title>
        <authorList>
            <person name="Theologis A."/>
            <person name="Ecker J.R."/>
            <person name="Palm C.J."/>
            <person name="Federspiel N.A."/>
            <person name="Kaul S."/>
            <person name="White O."/>
            <person name="Alonso J."/>
            <person name="Altafi H."/>
            <person name="Araujo R."/>
            <person name="Bowman C.L."/>
            <person name="Brooks S.Y."/>
            <person name="Buehler E."/>
            <person name="Chan A."/>
            <person name="Chao Q."/>
            <person name="Chen H."/>
            <person name="Cheuk R.F."/>
            <person name="Chin C.W."/>
            <person name="Chung M.K."/>
            <person name="Conn L."/>
            <person name="Conway A.B."/>
            <person name="Conway A.R."/>
            <person name="Creasy T.H."/>
            <person name="Dewar K."/>
            <person name="Dunn P."/>
            <person name="Etgu P."/>
            <person name="Feldblyum T.V."/>
            <person name="Feng J.-D."/>
            <person name="Fong B."/>
            <person name="Fujii C.Y."/>
            <person name="Gill J.E."/>
            <person name="Goldsmith A.D."/>
            <person name="Haas B."/>
            <person name="Hansen N.F."/>
            <person name="Hughes B."/>
            <person name="Huizar L."/>
            <person name="Hunter J.L."/>
            <person name="Jenkins J."/>
            <person name="Johnson-Hopson C."/>
            <person name="Khan S."/>
            <person name="Khaykin E."/>
            <person name="Kim C.J."/>
            <person name="Koo H.L."/>
            <person name="Kremenetskaia I."/>
            <person name="Kurtz D.B."/>
            <person name="Kwan A."/>
            <person name="Lam B."/>
            <person name="Langin-Hooper S."/>
            <person name="Lee A."/>
            <person name="Lee J.M."/>
            <person name="Lenz C.A."/>
            <person name="Li J.H."/>
            <person name="Li Y.-P."/>
            <person name="Lin X."/>
            <person name="Liu S.X."/>
            <person name="Liu Z.A."/>
            <person name="Luros J.S."/>
            <person name="Maiti R."/>
            <person name="Marziali A."/>
            <person name="Militscher J."/>
            <person name="Miranda M."/>
            <person name="Nguyen M."/>
            <person name="Nierman W.C."/>
            <person name="Osborne B.I."/>
            <person name="Pai G."/>
            <person name="Peterson J."/>
            <person name="Pham P.K."/>
            <person name="Rizzo M."/>
            <person name="Rooney T."/>
            <person name="Rowley D."/>
            <person name="Sakano H."/>
            <person name="Salzberg S.L."/>
            <person name="Schwartz J.R."/>
            <person name="Shinn P."/>
            <person name="Southwick A.M."/>
            <person name="Sun H."/>
            <person name="Tallon L.J."/>
            <person name="Tambunga G."/>
            <person name="Toriumi M.J."/>
            <person name="Town C.D."/>
            <person name="Utterback T."/>
            <person name="Van Aken S."/>
            <person name="Vaysberg M."/>
            <person name="Vysotskaia V.S."/>
            <person name="Walker M."/>
            <person name="Wu D."/>
            <person name="Yu G."/>
            <person name="Fraser C.M."/>
            <person name="Venter J.C."/>
            <person name="Davis R.W."/>
        </authorList>
    </citation>
    <scope>NUCLEOTIDE SEQUENCE [LARGE SCALE GENOMIC DNA]</scope>
    <source>
        <strain>cv. Columbia</strain>
    </source>
</reference>
<reference key="3">
    <citation type="journal article" date="2017" name="Plant J.">
        <title>Araport11: a complete reannotation of the Arabidopsis thaliana reference genome.</title>
        <authorList>
            <person name="Cheng C.Y."/>
            <person name="Krishnakumar V."/>
            <person name="Chan A.P."/>
            <person name="Thibaud-Nissen F."/>
            <person name="Schobel S."/>
            <person name="Town C.D."/>
        </authorList>
    </citation>
    <scope>GENOME REANNOTATION</scope>
    <source>
        <strain>cv. Columbia</strain>
    </source>
</reference>
<reference key="4">
    <citation type="journal article" date="2003" name="Science">
        <title>Empirical analysis of transcriptional activity in the Arabidopsis genome.</title>
        <authorList>
            <person name="Yamada K."/>
            <person name="Lim J."/>
            <person name="Dale J.M."/>
            <person name="Chen H."/>
            <person name="Shinn P."/>
            <person name="Palm C.J."/>
            <person name="Southwick A.M."/>
            <person name="Wu H.C."/>
            <person name="Kim C.J."/>
            <person name="Nguyen M."/>
            <person name="Pham P.K."/>
            <person name="Cheuk R.F."/>
            <person name="Karlin-Newmann G."/>
            <person name="Liu S.X."/>
            <person name="Lam B."/>
            <person name="Sakano H."/>
            <person name="Wu T."/>
            <person name="Yu G."/>
            <person name="Miranda M."/>
            <person name="Quach H.L."/>
            <person name="Tripp M."/>
            <person name="Chang C.H."/>
            <person name="Lee J.M."/>
            <person name="Toriumi M.J."/>
            <person name="Chan M.M."/>
            <person name="Tang C.C."/>
            <person name="Onodera C.S."/>
            <person name="Deng J.M."/>
            <person name="Akiyama K."/>
            <person name="Ansari Y."/>
            <person name="Arakawa T."/>
            <person name="Banh J."/>
            <person name="Banno F."/>
            <person name="Bowser L."/>
            <person name="Brooks S.Y."/>
            <person name="Carninci P."/>
            <person name="Chao Q."/>
            <person name="Choy N."/>
            <person name="Enju A."/>
            <person name="Goldsmith A.D."/>
            <person name="Gurjal M."/>
            <person name="Hansen N.F."/>
            <person name="Hayashizaki Y."/>
            <person name="Johnson-Hopson C."/>
            <person name="Hsuan V.W."/>
            <person name="Iida K."/>
            <person name="Karnes M."/>
            <person name="Khan S."/>
            <person name="Koesema E."/>
            <person name="Ishida J."/>
            <person name="Jiang P.X."/>
            <person name="Jones T."/>
            <person name="Kawai J."/>
            <person name="Kamiya A."/>
            <person name="Meyers C."/>
            <person name="Nakajima M."/>
            <person name="Narusaka M."/>
            <person name="Seki M."/>
            <person name="Sakurai T."/>
            <person name="Satou M."/>
            <person name="Tamse R."/>
            <person name="Vaysberg M."/>
            <person name="Wallender E.K."/>
            <person name="Wong C."/>
            <person name="Yamamura Y."/>
            <person name="Yuan S."/>
            <person name="Shinozaki K."/>
            <person name="Davis R.W."/>
            <person name="Theologis A."/>
            <person name="Ecker J.R."/>
        </authorList>
    </citation>
    <scope>NUCLEOTIDE SEQUENCE [LARGE SCALE MRNA]</scope>
    <source>
        <strain>cv. Columbia</strain>
    </source>
</reference>
<reference key="5">
    <citation type="submission" date="2002-03" db="EMBL/GenBank/DDBJ databases">
        <title>Full-length cDNA from Arabidopsis thaliana.</title>
        <authorList>
            <person name="Brover V.V."/>
            <person name="Troukhan M.E."/>
            <person name="Alexandrov N.A."/>
            <person name="Lu Y.-P."/>
            <person name="Flavell R.B."/>
            <person name="Feldmann K.A."/>
        </authorList>
    </citation>
    <scope>NUCLEOTIDE SEQUENCE [LARGE SCALE MRNA]</scope>
</reference>
<reference key="6">
    <citation type="submission" date="2006-07" db="EMBL/GenBank/DDBJ databases">
        <title>Large-scale analysis of RIKEN Arabidopsis full-length (RAFL) cDNAs.</title>
        <authorList>
            <person name="Totoki Y."/>
            <person name="Seki M."/>
            <person name="Ishida J."/>
            <person name="Nakajima M."/>
            <person name="Enju A."/>
            <person name="Kamiya A."/>
            <person name="Narusaka M."/>
            <person name="Shin-i T."/>
            <person name="Nakagawa M."/>
            <person name="Sakamoto N."/>
            <person name="Oishi K."/>
            <person name="Kohara Y."/>
            <person name="Kobayashi M."/>
            <person name="Toyoda A."/>
            <person name="Sakaki Y."/>
            <person name="Sakurai T."/>
            <person name="Iida K."/>
            <person name="Akiyama K."/>
            <person name="Satou M."/>
            <person name="Toyoda T."/>
            <person name="Konagaya A."/>
            <person name="Carninci P."/>
            <person name="Kawai J."/>
            <person name="Hayashizaki Y."/>
            <person name="Shinozaki K."/>
        </authorList>
    </citation>
    <scope>NUCLEOTIDE SEQUENCE [LARGE SCALE MRNA]</scope>
    <source>
        <strain>cv. Columbia</strain>
    </source>
</reference>
<reference key="7">
    <citation type="journal article" date="2002" name="J. Biol. Chem.">
        <title>Proteome map of the chloroplast lumen of Arabidopsis thaliana.</title>
        <authorList>
            <person name="Schubert M."/>
            <person name="Petersson U.A."/>
            <person name="Haas B.J."/>
            <person name="Funk C."/>
            <person name="Schroeder W.P."/>
            <person name="Kieselbach T."/>
        </authorList>
    </citation>
    <scope>PROTEIN SEQUENCE OF 85-94</scope>
    <scope>SUBCELLULAR LOCATION</scope>
</reference>
<reference key="8">
    <citation type="journal article" date="2002" name="Plant Cell">
        <title>Central functions of the lumenal and peripheral thylakoid proteome of Arabidopsis determined by experimentation and genome-wide prediction.</title>
        <authorList>
            <person name="Peltier J.-B."/>
            <person name="Emanuelsson O."/>
            <person name="Kalume D.E."/>
            <person name="Ytterberg J."/>
            <person name="Friso G."/>
            <person name="Rudella A."/>
            <person name="Liberles D.A."/>
            <person name="Soederberg L."/>
            <person name="Roepstorff P."/>
            <person name="von Heijne G."/>
            <person name="van Wijk K.J."/>
        </authorList>
    </citation>
    <scope>PROTEIN SEQUENCE OF N-TERMINUS</scope>
    <scope>IDENTIFICATION BY MASS SPECTROMETRY</scope>
</reference>
<reference key="9">
    <citation type="journal article" date="2008" name="PLoS ONE">
        <title>Sorting signals, N-terminal modifications and abundance of the chloroplast proteome.</title>
        <authorList>
            <person name="Zybailov B."/>
            <person name="Rutschow H."/>
            <person name="Friso G."/>
            <person name="Rudella A."/>
            <person name="Emanuelsson O."/>
            <person name="Sun Q."/>
            <person name="van Wijk K.J."/>
        </authorList>
    </citation>
    <scope>IDENTIFICATION BY MASS SPECTROMETRY</scope>
    <scope>SUBCELLULAR LOCATION [LARGE SCALE ANALYSIS]</scope>
</reference>
<gene>
    <name type="ordered locus">At1g54780</name>
    <name type="ORF">T22H22.19</name>
</gene>
<keyword id="KW-0002">3D-structure</keyword>
<keyword id="KW-0150">Chloroplast</keyword>
<keyword id="KW-0903">Direct protein sequencing</keyword>
<keyword id="KW-0472">Membrane</keyword>
<keyword id="KW-0934">Plastid</keyword>
<keyword id="KW-1185">Reference proteome</keyword>
<keyword id="KW-0793">Thylakoid</keyword>
<keyword id="KW-0809">Transit peptide</keyword>
<keyword id="KW-0812">Transmembrane</keyword>
<keyword id="KW-1133">Transmembrane helix</keyword>
<evidence type="ECO:0000255" key="1"/>
<evidence type="ECO:0000256" key="2">
    <source>
        <dbReference type="SAM" id="MobiDB-lite"/>
    </source>
</evidence>
<evidence type="ECO:0000269" key="3">
    <source>
    </source>
</evidence>
<evidence type="ECO:0000269" key="4">
    <source>
    </source>
</evidence>
<evidence type="ECO:0000269" key="5">
    <source>
    </source>
</evidence>
<evidence type="ECO:0000305" key="6"/>
<evidence type="ECO:0007829" key="7">
    <source>
        <dbReference type="PDB" id="3PVH"/>
    </source>
</evidence>